<gene>
    <name evidence="1" type="primary">mettl26</name>
    <name type="ORF">TNeu104f20.1</name>
</gene>
<sequence length="203" mass="22349">MLVAAAADRNKGPILEVLQQYVDPAAPKVRALEVASGTGQHCAHFAQALPNLHLVPSELDPHSRQSISAYISHWSLSNVEQPRTLDSSKSWETWGFSPNSLHLIICINMIHITEPSCTQGLFKGAGHLLMPGGVLFTYGPYSVNGILTPQSNVDFNISLKRRNPAWGIWDTSDLQNLATTCGMSLERMVDMPANNKCLIFRKK</sequence>
<name>MTL26_XENTR</name>
<reference key="1">
    <citation type="submission" date="2006-10" db="EMBL/GenBank/DDBJ databases">
        <authorList>
            <consortium name="Sanger Xenopus tropicalis EST/cDNA project"/>
        </authorList>
    </citation>
    <scope>NUCLEOTIDE SEQUENCE [LARGE SCALE MRNA]</scope>
    <source>
        <tissue>Neurula</tissue>
    </source>
</reference>
<reference key="2">
    <citation type="submission" date="2004-12" db="EMBL/GenBank/DDBJ databases">
        <authorList>
            <consortium name="NIH - Xenopus Gene Collection (XGC) project"/>
        </authorList>
    </citation>
    <scope>NUCLEOTIDE SEQUENCE [LARGE SCALE MRNA]</scope>
    <source>
        <tissue>Embryo</tissue>
    </source>
</reference>
<accession>Q28FI7</accession>
<accession>Q5PPQ0</accession>
<evidence type="ECO:0000250" key="1">
    <source>
        <dbReference type="UniProtKB" id="Q96S19"/>
    </source>
</evidence>
<evidence type="ECO:0000305" key="2"/>
<protein>
    <recommendedName>
        <fullName evidence="1">Methyltransferase-like 26</fullName>
    </recommendedName>
</protein>
<keyword id="KW-1185">Reference proteome</keyword>
<organism>
    <name type="scientific">Xenopus tropicalis</name>
    <name type="common">Western clawed frog</name>
    <name type="synonym">Silurana tropicalis</name>
    <dbReference type="NCBI Taxonomy" id="8364"/>
    <lineage>
        <taxon>Eukaryota</taxon>
        <taxon>Metazoa</taxon>
        <taxon>Chordata</taxon>
        <taxon>Craniata</taxon>
        <taxon>Vertebrata</taxon>
        <taxon>Euteleostomi</taxon>
        <taxon>Amphibia</taxon>
        <taxon>Batrachia</taxon>
        <taxon>Anura</taxon>
        <taxon>Pipoidea</taxon>
        <taxon>Pipidae</taxon>
        <taxon>Xenopodinae</taxon>
        <taxon>Xenopus</taxon>
        <taxon>Silurana</taxon>
    </lineage>
</organism>
<comment type="similarity">
    <text evidence="2">Belongs to the UPF0585 family.</text>
</comment>
<comment type="sequence caution" evidence="2">
    <conflict type="erroneous initiation">
        <sequence resource="EMBL-CDS" id="AAH87562"/>
    </conflict>
    <text>Extended N-terminus.</text>
</comment>
<comment type="sequence caution" evidence="2">
    <conflict type="erroneous initiation">
        <sequence resource="EMBL-CDS" id="CAJ82724"/>
    </conflict>
    <text>Extended N-terminus.</text>
</comment>
<dbReference type="EMBL" id="CR761953">
    <property type="protein sequence ID" value="CAJ82724.1"/>
    <property type="status" value="ALT_INIT"/>
    <property type="molecule type" value="mRNA"/>
</dbReference>
<dbReference type="EMBL" id="BC087562">
    <property type="protein sequence ID" value="AAH87562.2"/>
    <property type="status" value="ALT_INIT"/>
    <property type="molecule type" value="mRNA"/>
</dbReference>
<dbReference type="RefSeq" id="NP_001034823.2">
    <property type="nucleotide sequence ID" value="NM_001039734.1"/>
</dbReference>
<dbReference type="SMR" id="Q28FI7"/>
<dbReference type="FunCoup" id="Q28FI7">
    <property type="interactions" value="260"/>
</dbReference>
<dbReference type="GeneID" id="496705"/>
<dbReference type="KEGG" id="xtr:496705"/>
<dbReference type="AGR" id="Xenbase:XB-GENE-981693"/>
<dbReference type="CTD" id="84326"/>
<dbReference type="Xenbase" id="XB-GENE-981693">
    <property type="gene designation" value="mettl26"/>
</dbReference>
<dbReference type="InParanoid" id="Q28FI7"/>
<dbReference type="OMA" id="YLYGPYK"/>
<dbReference type="OrthoDB" id="10258744at2759"/>
<dbReference type="Proteomes" id="UP000008143">
    <property type="component" value="Chromosome 9"/>
</dbReference>
<dbReference type="Gene3D" id="3.40.50.150">
    <property type="entry name" value="Vaccinia Virus protein VP39"/>
    <property type="match status" value="1"/>
</dbReference>
<dbReference type="InterPro" id="IPR010342">
    <property type="entry name" value="DUF938"/>
</dbReference>
<dbReference type="InterPro" id="IPR029063">
    <property type="entry name" value="SAM-dependent_MTases_sf"/>
</dbReference>
<dbReference type="PANTHER" id="PTHR20974:SF2">
    <property type="entry name" value="METHYLTRANSFERASE-LIKE 26"/>
    <property type="match status" value="1"/>
</dbReference>
<dbReference type="PANTHER" id="PTHR20974">
    <property type="entry name" value="UPF0585 PROTEIN CG18661"/>
    <property type="match status" value="1"/>
</dbReference>
<dbReference type="Pfam" id="PF06080">
    <property type="entry name" value="DUF938"/>
    <property type="match status" value="1"/>
</dbReference>
<dbReference type="SUPFAM" id="SSF53335">
    <property type="entry name" value="S-adenosyl-L-methionine-dependent methyltransferases"/>
    <property type="match status" value="1"/>
</dbReference>
<proteinExistence type="evidence at transcript level"/>
<feature type="chain" id="PRO_0000337120" description="Methyltransferase-like 26">
    <location>
        <begin position="1"/>
        <end position="203"/>
    </location>
</feature>
<feature type="sequence conflict" description="In Ref. 2; AAH87562." evidence="2" ref="2">
    <original>M</original>
    <variation>I</variation>
    <location>
        <position position="130"/>
    </location>
</feature>